<name>ALLSA_CAMFO</name>
<reference evidence="6" key="1">
    <citation type="journal article" date="2012" name="PLoS ONE">
        <title>Discovery of defense- and neuropeptides in social ants by genome-mining.</title>
        <authorList>
            <person name="Gruber C.W."/>
            <person name="Muttenthaler M."/>
        </authorList>
    </citation>
    <scope>NUCLEOTIDE SEQUENCE [GENOMIC DNA]</scope>
</reference>
<reference key="2">
    <citation type="journal article" date="2010" name="Science">
        <title>Genomic comparison of the ants Camponotus floridanus and Harpegnathos saltator.</title>
        <authorList>
            <person name="Bonasio R."/>
            <person name="Zhang G."/>
            <person name="Ye C."/>
            <person name="Mutti N.S."/>
            <person name="Fang X."/>
            <person name="Qin N."/>
            <person name="Donahue G."/>
            <person name="Yang P."/>
            <person name="Li Q."/>
            <person name="Li C."/>
            <person name="Zhang P."/>
            <person name="Huang Z."/>
            <person name="Berger S.L."/>
            <person name="Reinberg D."/>
            <person name="Wang J."/>
            <person name="Liebig J."/>
        </authorList>
    </citation>
    <scope>NUCLEOTIDE SEQUENCE [LARGE SCALE GENOMIC DNA]</scope>
</reference>
<reference evidence="4" key="3">
    <citation type="journal article" date="2015" name="J. Proteome Res.">
        <title>Neuropeptidomics of the carpenter ant Camponotus floridanus.</title>
        <authorList>
            <person name="Schmitt F."/>
            <person name="Vanselow J.T."/>
            <person name="Schlosser A."/>
            <person name="Kahnt J."/>
            <person name="Roessler W."/>
            <person name="Wegener C."/>
        </authorList>
    </citation>
    <scope>PROTEIN SEQUENCE OF 67-74; 87-94; 98-105; 142-150 AND 154-165</scope>
    <scope>TISSUE SPECIFICITY</scope>
    <scope>AMIDATION AT ILE-74; ILE-94; ILE-105; ILE-150 AND SER-165</scope>
    <scope>MASS SPECTROMETRY</scope>
    <scope>IDENTIFICATION BY MASS SPECTROMETRY</scope>
</reference>
<dbReference type="EMBL" id="BK008412">
    <property type="protein sequence ID" value="DAA35076.1"/>
    <property type="molecule type" value="Genomic_DNA"/>
</dbReference>
<dbReference type="EMBL" id="GL438827">
    <property type="protein sequence ID" value="EFN68211.1"/>
    <property type="molecule type" value="Genomic_DNA"/>
</dbReference>
<dbReference type="STRING" id="104421.E2ADX8"/>
<dbReference type="EnsemblMetazoa" id="XM_011258006.3">
    <property type="protein sequence ID" value="XP_011256308.1"/>
    <property type="gene ID" value="LOC105251311"/>
</dbReference>
<dbReference type="EnsemblMetazoa" id="XM_011258007.2">
    <property type="protein sequence ID" value="XP_011256309.1"/>
    <property type="gene ID" value="LOC105251311"/>
</dbReference>
<dbReference type="KEGG" id="cfo:105251311"/>
<dbReference type="CTD" id="100679594"/>
<dbReference type="OMA" id="EKRAYAY"/>
<dbReference type="OrthoDB" id="10067964at2759"/>
<dbReference type="Proteomes" id="UP000000311">
    <property type="component" value="Unassembled WGS sequence"/>
</dbReference>
<dbReference type="GO" id="GO:0005576">
    <property type="term" value="C:extracellular region"/>
    <property type="evidence" value="ECO:0007669"/>
    <property type="project" value="UniProtKB-SubCell"/>
</dbReference>
<dbReference type="GO" id="GO:0007218">
    <property type="term" value="P:neuropeptide signaling pathway"/>
    <property type="evidence" value="ECO:0007669"/>
    <property type="project" value="UniProtKB-KW"/>
</dbReference>
<evidence type="ECO:0000255" key="1"/>
<evidence type="ECO:0000269" key="2">
    <source>
    </source>
</evidence>
<evidence type="ECO:0000303" key="3">
    <source>
    </source>
</evidence>
<evidence type="ECO:0000305" key="4"/>
<evidence type="ECO:0000305" key="5">
    <source>
    </source>
</evidence>
<evidence type="ECO:0000312" key="6">
    <source>
        <dbReference type="EMBL" id="DAA35076.1"/>
    </source>
</evidence>
<evidence type="ECO:0000312" key="7">
    <source>
        <dbReference type="EMBL" id="EFN68211.1"/>
    </source>
</evidence>
<gene>
    <name evidence="7" type="ORF">EAG_13122</name>
</gene>
<comment type="function">
    <text evidence="4">May act as a neurotransmitter or neuromodulator.</text>
</comment>
<comment type="subcellular location">
    <subcellularLocation>
        <location evidence="5">Secreted</location>
    </subcellularLocation>
</comment>
<comment type="tissue specificity">
    <text evidence="2">Allatostatins A1, A2 and A3 are expressed in brain, antennal lobes, optical lobes, gnathal ganglia, the retrocerebral complex and thoracic, abdominal and ventral ganglia. Allatostain A4 is expressed in brain (at protein level).</text>
</comment>
<comment type="mass spectrometry" mass="935.54" method="Electrospray" evidence="2">
    <molecule>Allatostatin A1</molecule>
</comment>
<comment type="mass spectrometry" mass="923.51" method="Electrospray" evidence="2">
    <molecule>Allatostatin A2</molecule>
</comment>
<comment type="mass spectrometry" mass="1038.58" method="Electrospray" evidence="2">
    <molecule>Allatostatin A3</molecule>
</comment>
<comment type="mass spectrometry" mass="908.46" method="Electrospray" evidence="2">
    <molecule>Allatostatin A4</molecule>
</comment>
<comment type="mass spectrometry" mass="1306.65" method="Electrospray" evidence="2">
    <molecule>Allatostatin A5</molecule>
</comment>
<comment type="similarity">
    <text evidence="4">Belongs to the allatostatin family.</text>
</comment>
<keyword id="KW-0027">Amidation</keyword>
<keyword id="KW-0165">Cleavage on pair of basic residues</keyword>
<keyword id="KW-0903">Direct protein sequencing</keyword>
<keyword id="KW-0527">Neuropeptide</keyword>
<keyword id="KW-1185">Reference proteome</keyword>
<keyword id="KW-0964">Secreted</keyword>
<keyword id="KW-0732">Signal</keyword>
<organism>
    <name type="scientific">Camponotus floridanus</name>
    <name type="common">Florida carpenter ant</name>
    <dbReference type="NCBI Taxonomy" id="104421"/>
    <lineage>
        <taxon>Eukaryota</taxon>
        <taxon>Metazoa</taxon>
        <taxon>Ecdysozoa</taxon>
        <taxon>Arthropoda</taxon>
        <taxon>Hexapoda</taxon>
        <taxon>Insecta</taxon>
        <taxon>Pterygota</taxon>
        <taxon>Neoptera</taxon>
        <taxon>Endopterygota</taxon>
        <taxon>Hymenoptera</taxon>
        <taxon>Apocrita</taxon>
        <taxon>Aculeata</taxon>
        <taxon>Formicoidea</taxon>
        <taxon>Formicidae</taxon>
        <taxon>Formicinae</taxon>
        <taxon>Camponotus</taxon>
    </lineage>
</organism>
<sequence length="193" mass="21922">MKTSSLIAMRLIIFYLLSVVGRSTAAVEEAPASSLHIPRLNPLSSNLEYDEPSEKRAYAYISEYKRLPLYNFGIGKRWIDNSEDKRTRPFSFGIGKRLRDYRFGIGKRNSGYRPLGMDFSVDNMDFHSREDNLDDFIDDKRGGQPFSFGIGKRGWKLPMGEMAVSGRRLNDVVGPKYLLGLGKGLSENENLIQ</sequence>
<proteinExistence type="evidence at protein level"/>
<feature type="signal peptide" evidence="1">
    <location>
        <begin position="1"/>
        <end position="25"/>
    </location>
</feature>
<feature type="propeptide" id="PRO_0000434185" evidence="5">
    <location>
        <begin position="26"/>
        <end position="64"/>
    </location>
</feature>
<feature type="peptide" id="PRO_0000434186" description="Allatostatin A1" evidence="2">
    <location>
        <begin position="67"/>
        <end position="74"/>
    </location>
</feature>
<feature type="propeptide" id="PRO_0000434187" evidence="5">
    <location>
        <begin position="78"/>
        <end position="84"/>
    </location>
</feature>
<feature type="peptide" id="PRO_0000434188" description="Allatostatin A2" evidence="2">
    <location>
        <begin position="87"/>
        <end position="94"/>
    </location>
</feature>
<feature type="peptide" id="PRO_0000434189" description="Allatostatin A3" evidence="2">
    <location>
        <begin position="98"/>
        <end position="105"/>
    </location>
</feature>
<feature type="propeptide" id="PRO_0000434190" evidence="5">
    <location>
        <begin position="109"/>
        <end position="139"/>
    </location>
</feature>
<feature type="peptide" id="PRO_0000434191" description="Allatostatin A4" evidence="2">
    <location>
        <begin position="142"/>
        <end position="150"/>
    </location>
</feature>
<feature type="peptide" id="PRO_0000434192" description="Allatostatin A5" evidence="2">
    <location>
        <begin position="154"/>
        <end position="165"/>
    </location>
</feature>
<feature type="propeptide" id="PRO_0000434193" evidence="2">
    <location>
        <begin position="169"/>
        <end position="193"/>
    </location>
</feature>
<feature type="modified residue" description="Isoleucine amide" evidence="2">
    <location>
        <position position="74"/>
    </location>
</feature>
<feature type="modified residue" description="Isoleucine amide" evidence="2">
    <location>
        <position position="94"/>
    </location>
</feature>
<feature type="modified residue" description="Isoleucine amide" evidence="2">
    <location>
        <position position="105"/>
    </location>
</feature>
<feature type="modified residue" description="Isoleucine amide" evidence="2">
    <location>
        <position position="150"/>
    </location>
</feature>
<feature type="modified residue" description="Serine amide" evidence="2">
    <location>
        <position position="165"/>
    </location>
</feature>
<accession>E2ADX8</accession>
<protein>
    <recommendedName>
        <fullName evidence="3">Allatostatin A</fullName>
    </recommendedName>
    <component>
        <recommendedName>
            <fullName evidence="3">Allatostatin A1</fullName>
        </recommendedName>
    </component>
    <component>
        <recommendedName>
            <fullName evidence="3">Allatostatin A2</fullName>
        </recommendedName>
    </component>
    <component>
        <recommendedName>
            <fullName evidence="3">Allatostatin A3</fullName>
        </recommendedName>
    </component>
    <component>
        <recommendedName>
            <fullName evidence="3">Allatostatin A4</fullName>
        </recommendedName>
    </component>
    <component>
        <recommendedName>
            <fullName evidence="3">Allatostatin A5</fullName>
        </recommendedName>
    </component>
</protein>